<protein>
    <recommendedName>
        <fullName evidence="1">Phosphoglucosamine mutase</fullName>
        <ecNumber evidence="1">5.4.2.10</ecNumber>
    </recommendedName>
</protein>
<keyword id="KW-0413">Isomerase</keyword>
<keyword id="KW-0460">Magnesium</keyword>
<keyword id="KW-0479">Metal-binding</keyword>
<keyword id="KW-0597">Phosphoprotein</keyword>
<evidence type="ECO:0000255" key="1">
    <source>
        <dbReference type="HAMAP-Rule" id="MF_01554"/>
    </source>
</evidence>
<accession>B6END8</accession>
<feature type="chain" id="PRO_1000201055" description="Phosphoglucosamine mutase">
    <location>
        <begin position="1"/>
        <end position="445"/>
    </location>
</feature>
<feature type="active site" description="Phosphoserine intermediate" evidence="1">
    <location>
        <position position="102"/>
    </location>
</feature>
<feature type="binding site" description="via phosphate group" evidence="1">
    <location>
        <position position="102"/>
    </location>
    <ligand>
        <name>Mg(2+)</name>
        <dbReference type="ChEBI" id="CHEBI:18420"/>
    </ligand>
</feature>
<feature type="binding site" evidence="1">
    <location>
        <position position="241"/>
    </location>
    <ligand>
        <name>Mg(2+)</name>
        <dbReference type="ChEBI" id="CHEBI:18420"/>
    </ligand>
</feature>
<feature type="binding site" evidence="1">
    <location>
        <position position="243"/>
    </location>
    <ligand>
        <name>Mg(2+)</name>
        <dbReference type="ChEBI" id="CHEBI:18420"/>
    </ligand>
</feature>
<feature type="binding site" evidence="1">
    <location>
        <position position="245"/>
    </location>
    <ligand>
        <name>Mg(2+)</name>
        <dbReference type="ChEBI" id="CHEBI:18420"/>
    </ligand>
</feature>
<feature type="modified residue" description="Phosphoserine" evidence="1">
    <location>
        <position position="102"/>
    </location>
</feature>
<name>GLMM_ALISL</name>
<proteinExistence type="inferred from homology"/>
<dbReference type="EC" id="5.4.2.10" evidence="1"/>
<dbReference type="EMBL" id="FM178379">
    <property type="protein sequence ID" value="CAQ78279.1"/>
    <property type="molecule type" value="Genomic_DNA"/>
</dbReference>
<dbReference type="RefSeq" id="WP_012549402.1">
    <property type="nucleotide sequence ID" value="NC_011312.1"/>
</dbReference>
<dbReference type="SMR" id="B6END8"/>
<dbReference type="KEGG" id="vsa:VSAL_I0594"/>
<dbReference type="eggNOG" id="COG1109">
    <property type="taxonomic scope" value="Bacteria"/>
</dbReference>
<dbReference type="HOGENOM" id="CLU_016950_7_0_6"/>
<dbReference type="Proteomes" id="UP000001730">
    <property type="component" value="Chromosome 1"/>
</dbReference>
<dbReference type="GO" id="GO:0005829">
    <property type="term" value="C:cytosol"/>
    <property type="evidence" value="ECO:0007669"/>
    <property type="project" value="TreeGrafter"/>
</dbReference>
<dbReference type="GO" id="GO:0000287">
    <property type="term" value="F:magnesium ion binding"/>
    <property type="evidence" value="ECO:0007669"/>
    <property type="project" value="UniProtKB-UniRule"/>
</dbReference>
<dbReference type="GO" id="GO:0008966">
    <property type="term" value="F:phosphoglucosamine mutase activity"/>
    <property type="evidence" value="ECO:0007669"/>
    <property type="project" value="UniProtKB-UniRule"/>
</dbReference>
<dbReference type="GO" id="GO:0004615">
    <property type="term" value="F:phosphomannomutase activity"/>
    <property type="evidence" value="ECO:0007669"/>
    <property type="project" value="TreeGrafter"/>
</dbReference>
<dbReference type="GO" id="GO:0005975">
    <property type="term" value="P:carbohydrate metabolic process"/>
    <property type="evidence" value="ECO:0007669"/>
    <property type="project" value="InterPro"/>
</dbReference>
<dbReference type="GO" id="GO:0009252">
    <property type="term" value="P:peptidoglycan biosynthetic process"/>
    <property type="evidence" value="ECO:0007669"/>
    <property type="project" value="TreeGrafter"/>
</dbReference>
<dbReference type="GO" id="GO:0006048">
    <property type="term" value="P:UDP-N-acetylglucosamine biosynthetic process"/>
    <property type="evidence" value="ECO:0007669"/>
    <property type="project" value="TreeGrafter"/>
</dbReference>
<dbReference type="CDD" id="cd05802">
    <property type="entry name" value="GlmM"/>
    <property type="match status" value="1"/>
</dbReference>
<dbReference type="FunFam" id="3.30.310.50:FF:000001">
    <property type="entry name" value="Phosphoglucosamine mutase"/>
    <property type="match status" value="1"/>
</dbReference>
<dbReference type="FunFam" id="3.40.120.10:FF:000001">
    <property type="entry name" value="Phosphoglucosamine mutase"/>
    <property type="match status" value="1"/>
</dbReference>
<dbReference type="FunFam" id="3.40.120.10:FF:000003">
    <property type="entry name" value="Phosphoglucosamine mutase"/>
    <property type="match status" value="1"/>
</dbReference>
<dbReference type="Gene3D" id="3.40.120.10">
    <property type="entry name" value="Alpha-D-Glucose-1,6-Bisphosphate, subunit A, domain 3"/>
    <property type="match status" value="3"/>
</dbReference>
<dbReference type="Gene3D" id="3.30.310.50">
    <property type="entry name" value="Alpha-D-phosphohexomutase, C-terminal domain"/>
    <property type="match status" value="1"/>
</dbReference>
<dbReference type="HAMAP" id="MF_01554_B">
    <property type="entry name" value="GlmM_B"/>
    <property type="match status" value="1"/>
</dbReference>
<dbReference type="InterPro" id="IPR005844">
    <property type="entry name" value="A-D-PHexomutase_a/b/a-I"/>
</dbReference>
<dbReference type="InterPro" id="IPR016055">
    <property type="entry name" value="A-D-PHexomutase_a/b/a-I/II/III"/>
</dbReference>
<dbReference type="InterPro" id="IPR005845">
    <property type="entry name" value="A-D-PHexomutase_a/b/a-II"/>
</dbReference>
<dbReference type="InterPro" id="IPR005846">
    <property type="entry name" value="A-D-PHexomutase_a/b/a-III"/>
</dbReference>
<dbReference type="InterPro" id="IPR005843">
    <property type="entry name" value="A-D-PHexomutase_C"/>
</dbReference>
<dbReference type="InterPro" id="IPR036900">
    <property type="entry name" value="A-D-PHexomutase_C_sf"/>
</dbReference>
<dbReference type="InterPro" id="IPR016066">
    <property type="entry name" value="A-D-PHexomutase_CS"/>
</dbReference>
<dbReference type="InterPro" id="IPR005841">
    <property type="entry name" value="Alpha-D-phosphohexomutase_SF"/>
</dbReference>
<dbReference type="InterPro" id="IPR006352">
    <property type="entry name" value="GlmM_bact"/>
</dbReference>
<dbReference type="InterPro" id="IPR050060">
    <property type="entry name" value="Phosphoglucosamine_mutase"/>
</dbReference>
<dbReference type="NCBIfam" id="TIGR01455">
    <property type="entry name" value="glmM"/>
    <property type="match status" value="1"/>
</dbReference>
<dbReference type="NCBIfam" id="NF008139">
    <property type="entry name" value="PRK10887.1"/>
    <property type="match status" value="1"/>
</dbReference>
<dbReference type="PANTHER" id="PTHR42946:SF1">
    <property type="entry name" value="PHOSPHOGLUCOMUTASE (ALPHA-D-GLUCOSE-1,6-BISPHOSPHATE-DEPENDENT)"/>
    <property type="match status" value="1"/>
</dbReference>
<dbReference type="PANTHER" id="PTHR42946">
    <property type="entry name" value="PHOSPHOHEXOSE MUTASE"/>
    <property type="match status" value="1"/>
</dbReference>
<dbReference type="Pfam" id="PF02878">
    <property type="entry name" value="PGM_PMM_I"/>
    <property type="match status" value="1"/>
</dbReference>
<dbReference type="Pfam" id="PF02879">
    <property type="entry name" value="PGM_PMM_II"/>
    <property type="match status" value="1"/>
</dbReference>
<dbReference type="Pfam" id="PF02880">
    <property type="entry name" value="PGM_PMM_III"/>
    <property type="match status" value="1"/>
</dbReference>
<dbReference type="Pfam" id="PF00408">
    <property type="entry name" value="PGM_PMM_IV"/>
    <property type="match status" value="1"/>
</dbReference>
<dbReference type="PRINTS" id="PR00509">
    <property type="entry name" value="PGMPMM"/>
</dbReference>
<dbReference type="SUPFAM" id="SSF55957">
    <property type="entry name" value="Phosphoglucomutase, C-terminal domain"/>
    <property type="match status" value="1"/>
</dbReference>
<dbReference type="SUPFAM" id="SSF53738">
    <property type="entry name" value="Phosphoglucomutase, first 3 domains"/>
    <property type="match status" value="3"/>
</dbReference>
<dbReference type="PROSITE" id="PS00710">
    <property type="entry name" value="PGM_PMM"/>
    <property type="match status" value="1"/>
</dbReference>
<sequence>MAERKYFGTDGVRGLVGQSPITPEFVMKLGWAAGKVLAKQGTKKVIIGKDTRISGYMLESALEAGLAAAGLKAKFTGPMPTPAVAYLTQTFRAEAGIVISASHNPYYDNGIKFFSSEGTKLPDDVEMAIEAELDKPMTCVESALLGKASRLNDAAGRYIEFCKSTFPKELSLAGVKMVVDCAHGATYHIAPNVFKELGAEIITIGCEPNGTNINHEVGATDVRALQAKVLEEKADFGVAFDGDGDRIIMVDDLGNKVDGDQIAYIIARDALRRGELKGGVVGTLMTNMGMEVALRNLGIPFVRSNVGDRYVMEKLLENNWKIGAENSGHVILLDKVTTGDAIVAALQVIASIVGSKMSLKELCNGMTLFPQVLENIRFVGDNNPLDTELVKAAQADVETKLGDNGRVLLRKSGTEPLIRVMVEGENAELVQQYALQIVDAVKESC</sequence>
<comment type="function">
    <text evidence="1">Catalyzes the conversion of glucosamine-6-phosphate to glucosamine-1-phosphate.</text>
</comment>
<comment type="catalytic activity">
    <reaction evidence="1">
        <text>alpha-D-glucosamine 1-phosphate = D-glucosamine 6-phosphate</text>
        <dbReference type="Rhea" id="RHEA:23424"/>
        <dbReference type="ChEBI" id="CHEBI:58516"/>
        <dbReference type="ChEBI" id="CHEBI:58725"/>
        <dbReference type="EC" id="5.4.2.10"/>
    </reaction>
</comment>
<comment type="cofactor">
    <cofactor evidence="1">
        <name>Mg(2+)</name>
        <dbReference type="ChEBI" id="CHEBI:18420"/>
    </cofactor>
    <text evidence="1">Binds 1 Mg(2+) ion per subunit.</text>
</comment>
<comment type="PTM">
    <text evidence="1">Activated by phosphorylation.</text>
</comment>
<comment type="similarity">
    <text evidence="1">Belongs to the phosphohexose mutase family.</text>
</comment>
<reference key="1">
    <citation type="journal article" date="2008" name="BMC Genomics">
        <title>The genome sequence of the fish pathogen Aliivibrio salmonicida strain LFI1238 shows extensive evidence of gene decay.</title>
        <authorList>
            <person name="Hjerde E."/>
            <person name="Lorentzen M.S."/>
            <person name="Holden M.T."/>
            <person name="Seeger K."/>
            <person name="Paulsen S."/>
            <person name="Bason N."/>
            <person name="Churcher C."/>
            <person name="Harris D."/>
            <person name="Norbertczak H."/>
            <person name="Quail M.A."/>
            <person name="Sanders S."/>
            <person name="Thurston S."/>
            <person name="Parkhill J."/>
            <person name="Willassen N.P."/>
            <person name="Thomson N.R."/>
        </authorList>
    </citation>
    <scope>NUCLEOTIDE SEQUENCE [LARGE SCALE GENOMIC DNA]</scope>
    <source>
        <strain>LFI1238</strain>
    </source>
</reference>
<gene>
    <name evidence="1" type="primary">glmM</name>
    <name type="ordered locus">VSAL_I0594</name>
</gene>
<organism>
    <name type="scientific">Aliivibrio salmonicida (strain LFI1238)</name>
    <name type="common">Vibrio salmonicida (strain LFI1238)</name>
    <dbReference type="NCBI Taxonomy" id="316275"/>
    <lineage>
        <taxon>Bacteria</taxon>
        <taxon>Pseudomonadati</taxon>
        <taxon>Pseudomonadota</taxon>
        <taxon>Gammaproteobacteria</taxon>
        <taxon>Vibrionales</taxon>
        <taxon>Vibrionaceae</taxon>
        <taxon>Aliivibrio</taxon>
    </lineage>
</organism>